<organism>
    <name type="scientific">Mus musculus</name>
    <name type="common">Mouse</name>
    <dbReference type="NCBI Taxonomy" id="10090"/>
    <lineage>
        <taxon>Eukaryota</taxon>
        <taxon>Metazoa</taxon>
        <taxon>Chordata</taxon>
        <taxon>Craniata</taxon>
        <taxon>Vertebrata</taxon>
        <taxon>Euteleostomi</taxon>
        <taxon>Mammalia</taxon>
        <taxon>Eutheria</taxon>
        <taxon>Euarchontoglires</taxon>
        <taxon>Glires</taxon>
        <taxon>Rodentia</taxon>
        <taxon>Myomorpha</taxon>
        <taxon>Muroidea</taxon>
        <taxon>Muridae</taxon>
        <taxon>Murinae</taxon>
        <taxon>Mus</taxon>
        <taxon>Mus</taxon>
    </lineage>
</organism>
<keyword id="KW-0130">Cell adhesion</keyword>
<keyword id="KW-1003">Cell membrane</keyword>
<keyword id="KW-0968">Cytoplasmic vesicle</keyword>
<keyword id="KW-1015">Disulfide bond</keyword>
<keyword id="KW-0245">EGF-like domain</keyword>
<keyword id="KW-0256">Endoplasmic reticulum</keyword>
<keyword id="KW-0967">Endosome</keyword>
<keyword id="KW-0278">Fertilization</keyword>
<keyword id="KW-0325">Glycoprotein</keyword>
<keyword id="KW-0326">Glycosidase</keyword>
<keyword id="KW-0378">Hydrolase</keyword>
<keyword id="KW-0472">Membrane</keyword>
<keyword id="KW-1185">Reference proteome</keyword>
<keyword id="KW-0964">Secreted</keyword>
<keyword id="KW-0732">Signal</keyword>
<gene>
    <name type="primary">Hyal3</name>
    <name type="synonym">Hyl3</name>
</gene>
<dbReference type="EC" id="3.2.1.35"/>
<dbReference type="EMBL" id="AY048681">
    <property type="protein sequence ID" value="AAL06145.1"/>
    <property type="molecule type" value="mRNA"/>
</dbReference>
<dbReference type="EMBL" id="AF074489">
    <property type="protein sequence ID" value="AAL54882.1"/>
    <property type="molecule type" value="mRNA"/>
</dbReference>
<dbReference type="EMBL" id="AF075576">
    <property type="protein sequence ID" value="AAL54883.1"/>
    <property type="molecule type" value="Genomic_DNA"/>
</dbReference>
<dbReference type="EMBL" id="AF338323">
    <property type="protein sequence ID" value="AAL57175.1"/>
    <property type="molecule type" value="Genomic_DNA"/>
</dbReference>
<dbReference type="EMBL" id="AL672219">
    <property type="status" value="NOT_ANNOTATED_CDS"/>
    <property type="molecule type" value="Genomic_DNA"/>
</dbReference>
<dbReference type="EMBL" id="BC018457">
    <property type="protein sequence ID" value="AAH18457.1"/>
    <property type="molecule type" value="mRNA"/>
</dbReference>
<dbReference type="CCDS" id="CCDS23499.1"/>
<dbReference type="RefSeq" id="NP_821139.2">
    <property type="nucleotide sequence ID" value="NM_178020.3"/>
</dbReference>
<dbReference type="SMR" id="Q8VEI3"/>
<dbReference type="FunCoup" id="Q8VEI3">
    <property type="interactions" value="262"/>
</dbReference>
<dbReference type="STRING" id="10090.ENSMUSP00000042667"/>
<dbReference type="CAZy" id="GH56">
    <property type="family name" value="Glycoside Hydrolase Family 56"/>
</dbReference>
<dbReference type="GlyCosmos" id="Q8VEI3">
    <property type="glycosylation" value="2 sites, No reported glycans"/>
</dbReference>
<dbReference type="GlyGen" id="Q8VEI3">
    <property type="glycosylation" value="3 sites, 1 N-linked glycan (1 site)"/>
</dbReference>
<dbReference type="PaxDb" id="10090-ENSMUSP00000042667"/>
<dbReference type="Antibodypedia" id="34877">
    <property type="antibodies" value="189 antibodies from 27 providers"/>
</dbReference>
<dbReference type="DNASU" id="109685"/>
<dbReference type="Ensembl" id="ENSMUST00000040059.9">
    <property type="protein sequence ID" value="ENSMUSP00000042667.3"/>
    <property type="gene ID" value="ENSMUSG00000036091.9"/>
</dbReference>
<dbReference type="Ensembl" id="ENSMUST00000148440.8">
    <property type="protein sequence ID" value="ENSMUSP00000119499.2"/>
    <property type="gene ID" value="ENSMUSG00000036091.9"/>
</dbReference>
<dbReference type="GeneID" id="109685"/>
<dbReference type="KEGG" id="mmu:109685"/>
<dbReference type="UCSC" id="uc009rmc.2">
    <property type="organism name" value="mouse"/>
</dbReference>
<dbReference type="AGR" id="MGI:1330288"/>
<dbReference type="CTD" id="8372"/>
<dbReference type="MGI" id="MGI:1330288">
    <property type="gene designation" value="Hyal3"/>
</dbReference>
<dbReference type="VEuPathDB" id="HostDB:ENSMUSG00000036091"/>
<dbReference type="eggNOG" id="ENOG502QTXP">
    <property type="taxonomic scope" value="Eukaryota"/>
</dbReference>
<dbReference type="GeneTree" id="ENSGT01020000230364"/>
<dbReference type="HOGENOM" id="CLU_036366_0_0_1"/>
<dbReference type="InParanoid" id="Q8VEI3"/>
<dbReference type="OMA" id="GWATSWH"/>
<dbReference type="OrthoDB" id="5796153at2759"/>
<dbReference type="PhylomeDB" id="Q8VEI3"/>
<dbReference type="TreeFam" id="TF321598"/>
<dbReference type="BRENDA" id="3.2.1.35">
    <property type="organism ID" value="3474"/>
</dbReference>
<dbReference type="Reactome" id="R-MMU-2024101">
    <property type="pathway name" value="CS/DS degradation"/>
</dbReference>
<dbReference type="Reactome" id="R-MMU-2160916">
    <property type="pathway name" value="Hyaluronan uptake and degradation"/>
</dbReference>
<dbReference type="BioGRID-ORCS" id="109685">
    <property type="hits" value="3 hits in 78 CRISPR screens"/>
</dbReference>
<dbReference type="PRO" id="PR:Q8VEI3"/>
<dbReference type="Proteomes" id="UP000000589">
    <property type="component" value="Chromosome 9"/>
</dbReference>
<dbReference type="RNAct" id="Q8VEI3">
    <property type="molecule type" value="protein"/>
</dbReference>
<dbReference type="Bgee" id="ENSMUSG00000036091">
    <property type="expression patterns" value="Expressed in mesodermal cell in embryo and 48 other cell types or tissues"/>
</dbReference>
<dbReference type="ExpressionAtlas" id="Q8VEI3">
    <property type="expression patterns" value="baseline and differential"/>
</dbReference>
<dbReference type="GO" id="GO:0002080">
    <property type="term" value="C:acrosomal membrane"/>
    <property type="evidence" value="ECO:0000314"/>
    <property type="project" value="UniProtKB"/>
</dbReference>
<dbReference type="GO" id="GO:0001669">
    <property type="term" value="C:acrosomal vesicle"/>
    <property type="evidence" value="ECO:0000314"/>
    <property type="project" value="UniProtKB"/>
</dbReference>
<dbReference type="GO" id="GO:0031410">
    <property type="term" value="C:cytoplasmic vesicle"/>
    <property type="evidence" value="ECO:0000314"/>
    <property type="project" value="UniProtKB"/>
</dbReference>
<dbReference type="GO" id="GO:0005769">
    <property type="term" value="C:early endosome"/>
    <property type="evidence" value="ECO:0000314"/>
    <property type="project" value="UniProtKB"/>
</dbReference>
<dbReference type="GO" id="GO:0005783">
    <property type="term" value="C:endoplasmic reticulum"/>
    <property type="evidence" value="ECO:0000314"/>
    <property type="project" value="UniProtKB"/>
</dbReference>
<dbReference type="GO" id="GO:0005576">
    <property type="term" value="C:extracellular region"/>
    <property type="evidence" value="ECO:0007669"/>
    <property type="project" value="UniProtKB-SubCell"/>
</dbReference>
<dbReference type="GO" id="GO:0005764">
    <property type="term" value="C:lysosome"/>
    <property type="evidence" value="ECO:0007669"/>
    <property type="project" value="Ensembl"/>
</dbReference>
<dbReference type="GO" id="GO:0005886">
    <property type="term" value="C:plasma membrane"/>
    <property type="evidence" value="ECO:0007669"/>
    <property type="project" value="UniProtKB-SubCell"/>
</dbReference>
<dbReference type="GO" id="GO:0097225">
    <property type="term" value="C:sperm midpiece"/>
    <property type="evidence" value="ECO:0000314"/>
    <property type="project" value="UniProtKB"/>
</dbReference>
<dbReference type="GO" id="GO:0033906">
    <property type="term" value="F:hyaluronoglucuronidase activity"/>
    <property type="evidence" value="ECO:0007669"/>
    <property type="project" value="Ensembl"/>
</dbReference>
<dbReference type="GO" id="GO:0004415">
    <property type="term" value="F:hyalurononglucosaminidase activity"/>
    <property type="evidence" value="ECO:0000314"/>
    <property type="project" value="UniProtKB"/>
</dbReference>
<dbReference type="GO" id="GO:0005975">
    <property type="term" value="P:carbohydrate metabolic process"/>
    <property type="evidence" value="ECO:0007669"/>
    <property type="project" value="InterPro"/>
</dbReference>
<dbReference type="GO" id="GO:0051216">
    <property type="term" value="P:cartilage development"/>
    <property type="evidence" value="ECO:0007669"/>
    <property type="project" value="Ensembl"/>
</dbReference>
<dbReference type="GO" id="GO:0007155">
    <property type="term" value="P:cell adhesion"/>
    <property type="evidence" value="ECO:0007669"/>
    <property type="project" value="UniProtKB-KW"/>
</dbReference>
<dbReference type="GO" id="GO:0071347">
    <property type="term" value="P:cellular response to interleukin-1"/>
    <property type="evidence" value="ECO:0007669"/>
    <property type="project" value="Ensembl"/>
</dbReference>
<dbReference type="GO" id="GO:0071356">
    <property type="term" value="P:cellular response to tumor necrosis factor"/>
    <property type="evidence" value="ECO:0007669"/>
    <property type="project" value="Ensembl"/>
</dbReference>
<dbReference type="GO" id="GO:0071493">
    <property type="term" value="P:cellular response to UV-B"/>
    <property type="evidence" value="ECO:0007669"/>
    <property type="project" value="Ensembl"/>
</dbReference>
<dbReference type="GO" id="GO:0030214">
    <property type="term" value="P:hyaluronan catabolic process"/>
    <property type="evidence" value="ECO:0000314"/>
    <property type="project" value="UniProtKB"/>
</dbReference>
<dbReference type="GO" id="GO:0006954">
    <property type="term" value="P:inflammatory response"/>
    <property type="evidence" value="ECO:0007669"/>
    <property type="project" value="Ensembl"/>
</dbReference>
<dbReference type="GO" id="GO:2000355">
    <property type="term" value="P:negative regulation of ovarian follicle development"/>
    <property type="evidence" value="ECO:0000314"/>
    <property type="project" value="UniProtKB"/>
</dbReference>
<dbReference type="GO" id="GO:0001552">
    <property type="term" value="P:ovarian follicle atresia"/>
    <property type="evidence" value="ECO:0000314"/>
    <property type="project" value="UniProtKB"/>
</dbReference>
<dbReference type="GO" id="GO:0007341">
    <property type="term" value="P:penetration of zona pellucida"/>
    <property type="evidence" value="ECO:0000315"/>
    <property type="project" value="UniProtKB"/>
</dbReference>
<dbReference type="GO" id="GO:2000368">
    <property type="term" value="P:positive regulation of acrosomal vesicle exocytosis"/>
    <property type="evidence" value="ECO:0000315"/>
    <property type="project" value="UniProtKB"/>
</dbReference>
<dbReference type="GO" id="GO:0046677">
    <property type="term" value="P:response to antibiotic"/>
    <property type="evidence" value="ECO:0007669"/>
    <property type="project" value="Ensembl"/>
</dbReference>
<dbReference type="GO" id="GO:0009615">
    <property type="term" value="P:response to virus"/>
    <property type="evidence" value="ECO:0000314"/>
    <property type="project" value="UniProtKB"/>
</dbReference>
<dbReference type="FunFam" id="3.20.20.70:FF:000065">
    <property type="entry name" value="Hyaluronidase"/>
    <property type="match status" value="1"/>
</dbReference>
<dbReference type="Gene3D" id="3.20.20.70">
    <property type="entry name" value="Aldolase class I"/>
    <property type="match status" value="1"/>
</dbReference>
<dbReference type="InterPro" id="IPR013785">
    <property type="entry name" value="Aldolase_TIM"/>
</dbReference>
<dbReference type="InterPro" id="IPR000742">
    <property type="entry name" value="EGF-like_dom"/>
</dbReference>
<dbReference type="InterPro" id="IPR013111">
    <property type="entry name" value="EGF_extracell"/>
</dbReference>
<dbReference type="InterPro" id="IPR017853">
    <property type="entry name" value="Glycoside_hydrolase_SF"/>
</dbReference>
<dbReference type="InterPro" id="IPR018155">
    <property type="entry name" value="Hyaluronidase"/>
</dbReference>
<dbReference type="InterPro" id="IPR027260">
    <property type="entry name" value="Hyaluronidase-3"/>
</dbReference>
<dbReference type="PANTHER" id="PTHR11769">
    <property type="entry name" value="HYALURONIDASE"/>
    <property type="match status" value="1"/>
</dbReference>
<dbReference type="PANTHER" id="PTHR11769:SF19">
    <property type="entry name" value="HYALURONIDASE-3"/>
    <property type="match status" value="1"/>
</dbReference>
<dbReference type="Pfam" id="PF07974">
    <property type="entry name" value="EGF_2"/>
    <property type="match status" value="1"/>
</dbReference>
<dbReference type="Pfam" id="PF01630">
    <property type="entry name" value="Glyco_hydro_56"/>
    <property type="match status" value="1"/>
</dbReference>
<dbReference type="PIRSF" id="PIRSF038193">
    <property type="entry name" value="Hyaluronidase"/>
    <property type="match status" value="1"/>
</dbReference>
<dbReference type="PIRSF" id="PIRSF500776">
    <property type="entry name" value="Hyaluronidase_3"/>
    <property type="match status" value="1"/>
</dbReference>
<dbReference type="PRINTS" id="PR00846">
    <property type="entry name" value="GLHYDRLASE56"/>
</dbReference>
<dbReference type="SUPFAM" id="SSF51445">
    <property type="entry name" value="(Trans)glycosidases"/>
    <property type="match status" value="1"/>
</dbReference>
<dbReference type="PROSITE" id="PS00022">
    <property type="entry name" value="EGF_1"/>
    <property type="match status" value="1"/>
</dbReference>
<dbReference type="PROSITE" id="PS01186">
    <property type="entry name" value="EGF_2"/>
    <property type="match status" value="1"/>
</dbReference>
<evidence type="ECO:0000250" key="1">
    <source>
        <dbReference type="UniProtKB" id="Q12794"/>
    </source>
</evidence>
<evidence type="ECO:0000255" key="2"/>
<evidence type="ECO:0000269" key="3">
    <source>
    </source>
</evidence>
<evidence type="ECO:0000269" key="4">
    <source>
    </source>
</evidence>
<evidence type="ECO:0000269" key="5">
    <source>
    </source>
</evidence>
<evidence type="ECO:0000269" key="6">
    <source>
    </source>
</evidence>
<evidence type="ECO:0000269" key="7">
    <source>
    </source>
</evidence>
<evidence type="ECO:0000305" key="8"/>
<protein>
    <recommendedName>
        <fullName>Hyaluronidase-3</fullName>
        <shortName>Hyal-3</shortName>
        <ecNumber>3.2.1.35</ecNumber>
    </recommendedName>
    <alternativeName>
        <fullName>Hyaluronoglucosaminidase-3</fullName>
    </alternativeName>
</protein>
<accession>Q8VEI3</accession>
<accession>B1AV95</accession>
<accession>Q8VBX7</accession>
<accession>Q8VI77</accession>
<sequence length="412" mass="46132">MIMHLGLMMVVGLTLCLMHGQALLQVPEHPFSVVWNVPSARCKAHFGVHLPLDALGIVANHGQHFHGQNISIFYKNQFGLYPYFGPRGTAHNGGIPQAVSLDHHLARAAHQILHSLGSSFAGLAVLDWEEWYPLWAGNWGPHRQVYLAASWVWTQQMFPGLDPQEQLHKAHTSFEQAARALMEYTLQLGRTLRPSGLWGFYRYPACGNGWHKMASNYTGHCHAAITTRNTQLRWLWAASSALFPSIYLPPRLPLAYRQAFVRHRLEEAFRVALLEHSHPLPVLAYSRLTHRSSGRFLSLDDLMQTIGVSAALGTAGVVLWGDLSFSSSEEKCWRLHDYLVGTLGPYVINVTKAAMACSHQRCHGHGRCARKDPGQMEAFLHLQPDDSLGAWNSFRCHCYSGWAGPTCLEPKP</sequence>
<comment type="function">
    <text evidence="4 5 7">Facilitates sperm penetration into the layer of cumulus cells surrounding the egg by digesting hyaluronic acid. Involved in induction of the acrosome reaction in the sperm (PubMed:20586096). Involved in follicular atresia, the breakdown of immature ovarian follicles that are not selected to ovulate. Induces ovarian granulosa cell apoptosis, possibly via apoptotic signaling pathway involving CASP8 and CASP3 activation, and poly(ADP-ribose) polymerase (PARP) cleavage (PubMed:18653706). Has no hyaluronidase activity in embryonic fibroblasts in vitro (PubMed:18234732). Has no hyaluronidase activity in granulosa cells in vitro (PubMed:18653706).</text>
</comment>
<comment type="catalytic activity">
    <reaction evidence="7">
        <text>Random hydrolysis of (1-&gt;4)-linkages between N-acetyl-beta-D-glucosamine and D-glucuronate residues in hyaluronate.</text>
        <dbReference type="EC" id="3.2.1.35"/>
    </reaction>
</comment>
<comment type="biophysicochemical properties">
    <phDependence>
        <text evidence="7">Optimum pH is 7. Higher activity at pH 4 than at pH 7 in sperm.</text>
    </phDependence>
</comment>
<comment type="subcellular location">
    <subcellularLocation>
        <location evidence="7">Secreted</location>
    </subcellularLocation>
    <subcellularLocation>
        <location evidence="7">Cell membrane</location>
    </subcellularLocation>
    <subcellularLocation>
        <location evidence="7">Cytoplasmic vesicle</location>
        <location evidence="7">Secretory vesicle</location>
        <location evidence="7">Acrosome</location>
    </subcellularLocation>
    <subcellularLocation>
        <location evidence="4">Endoplasmic reticulum</location>
    </subcellularLocation>
    <subcellularLocation>
        <location evidence="4">Early endosome</location>
    </subcellularLocation>
    <text evidence="4 7">Mostly present in low-density vesicles. Low levels in higher density vesicles of late endosomes and lysosomes. Localized in punctate cytoplasmic vesicles and in perinuclear structures, but does not colocalize with LAMP1 (PubMed:18234732). Localized on the plasma membrane over the acrosome and on the surface of the midpiece of the sperm tail (PubMed:20586096).</text>
</comment>
<comment type="tissue specificity">
    <text evidence="3 5 6 7">Expressed in testis, epididymal tissue, epididymal luminal fluid (ELF), acrosome-intact (AI) sperm and caput (CAP), corpus (COR) and caudal (CAU) sperm. Higher expression in sperm than testis (at protein level) (PubMed:20586096). Liver, kidney, skin, brain, stomach and testis (PubMed:11929860). Expressed mainly in granulosa cells of the ovaries. Expressed in small and large antral follicles. Not present in theca or stroma cells (PubMed:18653706). Expressed in testis and liver (PubMed:18762256). Expressed in testis and CAP, COR, and CAU epididymis tissue (PubMed:20586096).</text>
</comment>
<comment type="induction">
    <text evidence="5">Up-regulated expression in apoptotic granulosa cells and in atretic follicles of the ovaries (PubMed:18653706).</text>
</comment>
<comment type="PTM">
    <text evidence="4">N-glycosylated.</text>
</comment>
<comment type="disruption phenotype">
    <text evidence="6 7">No visible phenotype. Both male and female mice are viable. Skeletal features, joints, whole-body weights, organ weights, organ morphologies and the serum hyaluronic acid (HA) levels are normal. No evidence of glycosaminoglycan accumulation, including vacuolization, in tissues analyzed including liver, lung, kidney, spleen, skin, fat, testes and seminal vesicles at 12-14 months of age. No difference in tissue organization or connective tissue thickness. Only a subtle change in the alveolar structure and extracellular matrix thickness in lung tissue sections at 12-14 months of age. Lungs have larger alveoli and more areas of thickened interstitium. Lung tissues from 6 months old mice show more immature alveoli compared to wild-type (PubMed:18762256). Mice are fully fertile (PubMed:18762256, PubMed:20586096). Sperm show delayed cumulus penetration and reduced acrosomal exocytosis (PubMed:20586096).</text>
</comment>
<comment type="similarity">
    <text evidence="8">Belongs to the glycosyl hydrolase 56 family.</text>
</comment>
<name>HYAL3_MOUSE</name>
<proteinExistence type="evidence at protein level"/>
<reference key="1">
    <citation type="journal article" date="2002" name="J. Biol. Chem.">
        <title>Characterization of the murine hyaluronidase gene region reveals complex organization and cotranscription of Hyal1 with downstream genes, Fus2 and Hyal3.</title>
        <authorList>
            <person name="Shuttleworth T.L."/>
            <person name="Wilson M.D."/>
            <person name="Wicklow B.A."/>
            <person name="Wilkins J.A."/>
            <person name="Triggs-Raine B.L."/>
        </authorList>
    </citation>
    <scope>NUCLEOTIDE SEQUENCE [MRNA]</scope>
    <scope>TISSUE SPECIFICITY</scope>
    <source>
        <strain>CD-1</strain>
    </source>
</reference>
<reference key="2">
    <citation type="submission" date="1998-06" db="EMBL/GenBank/DDBJ databases">
        <title>Cloning and characterization of human and mouse HYAL3, a third somatic hyaluronidase paralog.</title>
        <authorList>
            <person name="Csoka A.B."/>
        </authorList>
    </citation>
    <scope>NUCLEOTIDE SEQUENCE [MRNA]</scope>
</reference>
<reference key="3">
    <citation type="submission" date="2001-01" db="EMBL/GenBank/DDBJ databases">
        <title>Genomic sequence of the mouse Hyal1 locus encoding the mouse Hyal1, Fus2, and Hyal3 genes.</title>
        <authorList>
            <person name="Csoka A.B."/>
        </authorList>
    </citation>
    <scope>NUCLEOTIDE SEQUENCE [GENOMIC DNA]</scope>
</reference>
<reference key="4">
    <citation type="journal article" date="2009" name="PLoS Biol.">
        <title>Lineage-specific biology revealed by a finished genome assembly of the mouse.</title>
        <authorList>
            <person name="Church D.M."/>
            <person name="Goodstadt L."/>
            <person name="Hillier L.W."/>
            <person name="Zody M.C."/>
            <person name="Goldstein S."/>
            <person name="She X."/>
            <person name="Bult C.J."/>
            <person name="Agarwala R."/>
            <person name="Cherry J.L."/>
            <person name="DiCuccio M."/>
            <person name="Hlavina W."/>
            <person name="Kapustin Y."/>
            <person name="Meric P."/>
            <person name="Maglott D."/>
            <person name="Birtle Z."/>
            <person name="Marques A.C."/>
            <person name="Graves T."/>
            <person name="Zhou S."/>
            <person name="Teague B."/>
            <person name="Potamousis K."/>
            <person name="Churas C."/>
            <person name="Place M."/>
            <person name="Herschleb J."/>
            <person name="Runnheim R."/>
            <person name="Forrest D."/>
            <person name="Amos-Landgraf J."/>
            <person name="Schwartz D.C."/>
            <person name="Cheng Z."/>
            <person name="Lindblad-Toh K."/>
            <person name="Eichler E.E."/>
            <person name="Ponting C.P."/>
        </authorList>
    </citation>
    <scope>NUCLEOTIDE SEQUENCE [LARGE SCALE GENOMIC DNA]</scope>
    <source>
        <strain>C57BL/6J</strain>
    </source>
</reference>
<reference key="5">
    <citation type="journal article" date="2004" name="Genome Res.">
        <title>The status, quality, and expansion of the NIH full-length cDNA project: the Mammalian Gene Collection (MGC).</title>
        <authorList>
            <consortium name="The MGC Project Team"/>
        </authorList>
    </citation>
    <scope>NUCLEOTIDE SEQUENCE [LARGE SCALE MRNA]</scope>
    <source>
        <strain>FVB/N</strain>
        <tissue>Mammary tumor</tissue>
    </source>
</reference>
<reference key="6">
    <citation type="journal article" date="2008" name="Endocrinology">
        <title>Mammalian hyaluronidase induces ovarian granulosa cell apoptosis and is involved in follicular atresia.</title>
        <authorList>
            <person name="Orimoto A.M."/>
            <person name="Dumaresq-Doiron K."/>
            <person name="Jiang J.Y."/>
            <person name="Tanphaichitr N."/>
            <person name="Tsang B.K."/>
            <person name="Carmona E."/>
        </authorList>
    </citation>
    <scope>FUNCTION</scope>
    <scope>TISSUE SPECIFICITY</scope>
    <scope>INDUCTION</scope>
</reference>
<reference key="7">
    <citation type="journal article" date="2008" name="Glycobiology">
        <title>Mouse Hyal3 encodes a 45- to 56-kDa glycoprotein whose overexpression increases hyaluronidase 1 activity in cultured cells.</title>
        <authorList>
            <person name="Hemming R."/>
            <person name="Martin D.C."/>
            <person name="Slominski E."/>
            <person name="Nagy J.I."/>
            <person name="Halayko A.J."/>
            <person name="Pind S."/>
            <person name="Triggs-Raine B."/>
        </authorList>
    </citation>
    <scope>FUNCTION</scope>
    <scope>SUBCELLULAR LOCATION</scope>
    <scope>GLYCOSYLATION</scope>
</reference>
<reference key="8">
    <citation type="journal article" date="2008" name="Matrix Biol.">
        <title>Hyaluronidase 3 (HYAL3) knockout mice do not display evidence of hyaluronan accumulation.</title>
        <authorList>
            <person name="Atmuri V."/>
            <person name="Martin D.C."/>
            <person name="Hemming R."/>
            <person name="Gutsol A."/>
            <person name="Byers S."/>
            <person name="Sahebjam S."/>
            <person name="Thliveris J.A."/>
            <person name="Mort J.S."/>
            <person name="Carmona E."/>
            <person name="Anderson J.E."/>
            <person name="Dakshinamurti S."/>
            <person name="Triggs-Raine B."/>
        </authorList>
    </citation>
    <scope>TISSUE SPECIFICITY</scope>
    <scope>DISRUPTION PHENOTYPE</scope>
</reference>
<reference key="9">
    <citation type="journal article" date="2010" name="Mol. Reprod. Dev.">
        <title>Acidic hyaluronidase activity is present in mouse sperm and is reduced in the absence of SPAM1: evidence for a role for hyaluronidase 3 in mouse and human sperm.</title>
        <authorList>
            <person name="Reese K.L."/>
            <person name="Aravindan R.G."/>
            <person name="Griffiths G.S."/>
            <person name="Shao M."/>
            <person name="Wang Y."/>
            <person name="Galileo D.S."/>
            <person name="Atmuri V."/>
            <person name="Triggs-Raine B.L."/>
            <person name="Martin-Deleon P.A."/>
        </authorList>
    </citation>
    <scope>FUNCTION</scope>
    <scope>CATALYTIC ACTIVITY</scope>
    <scope>BIOPHYSICOCHEMICAL PROPERTIES</scope>
    <scope>SUBCELLULAR LOCATION</scope>
    <scope>TISSUE SPECIFICITY</scope>
    <scope>DISRUPTION PHENOTYPE</scope>
</reference>
<feature type="signal peptide" evidence="2">
    <location>
        <begin position="1"/>
        <end position="22"/>
    </location>
</feature>
<feature type="chain" id="PRO_0000248201" description="Hyaluronidase-3">
    <location>
        <begin position="23"/>
        <end position="412"/>
    </location>
</feature>
<feature type="domain" description="EGF-like">
    <location>
        <begin position="353"/>
        <end position="408"/>
    </location>
</feature>
<feature type="active site" description="Proton donor" evidence="1">
    <location>
        <position position="129"/>
    </location>
</feature>
<feature type="glycosylation site" description="N-linked (GlcNAc...) asparagine" evidence="2">
    <location>
        <position position="69"/>
    </location>
</feature>
<feature type="glycosylation site" description="N-linked (GlcNAc...) asparagine" evidence="2">
    <location>
        <position position="216"/>
    </location>
</feature>
<feature type="disulfide bond" evidence="1">
    <location>
        <begin position="42"/>
        <end position="332"/>
    </location>
</feature>
<feature type="disulfide bond" evidence="1">
    <location>
        <begin position="206"/>
        <end position="221"/>
    </location>
</feature>
<feature type="disulfide bond" evidence="1">
    <location>
        <begin position="357"/>
        <end position="368"/>
    </location>
</feature>
<feature type="disulfide bond" evidence="1">
    <location>
        <begin position="362"/>
        <end position="396"/>
    </location>
</feature>
<feature type="disulfide bond" evidence="1">
    <location>
        <begin position="398"/>
        <end position="407"/>
    </location>
</feature>
<feature type="sequence conflict" description="In Ref. 1; AAL06145 and 5; AAH18457." evidence="8" ref="1 5">
    <original>R</original>
    <variation>Q</variation>
    <location>
        <position position="228"/>
    </location>
</feature>
<feature type="sequence conflict" description="In Ref. 3; AAL54883/AAL57175." evidence="8" ref="3">
    <original>F</original>
    <variation>S</variation>
    <location>
        <position position="296"/>
    </location>
</feature>
<feature type="sequence conflict" description="In Ref. 1; AAL06145 and 5; AAH18457." evidence="8" ref="1 5">
    <original>A</original>
    <variation>D</variation>
    <location>
        <position position="354"/>
    </location>
</feature>
<feature type="sequence conflict" description="In Ref. 2; AAL54882 and 3; AAL54883/AAL57175." evidence="8" ref="2 3">
    <original>H</original>
    <variation>R</variation>
    <location>
        <position position="397"/>
    </location>
</feature>